<keyword id="KW-0868">Chloride</keyword>
<keyword id="KW-0406">Ion transport</keyword>
<keyword id="KW-0472">Membrane</keyword>
<keyword id="KW-0630">Potassium</keyword>
<keyword id="KW-0633">Potassium transport</keyword>
<keyword id="KW-1185">Reference proteome</keyword>
<keyword id="KW-0769">Symport</keyword>
<keyword id="KW-0812">Transmembrane</keyword>
<keyword id="KW-1133">Transmembrane helix</keyword>
<keyword id="KW-0813">Transport</keyword>
<name>S12A8_XENLA</name>
<organism>
    <name type="scientific">Xenopus laevis</name>
    <name type="common">African clawed frog</name>
    <dbReference type="NCBI Taxonomy" id="8355"/>
    <lineage>
        <taxon>Eukaryota</taxon>
        <taxon>Metazoa</taxon>
        <taxon>Chordata</taxon>
        <taxon>Craniata</taxon>
        <taxon>Vertebrata</taxon>
        <taxon>Euteleostomi</taxon>
        <taxon>Amphibia</taxon>
        <taxon>Batrachia</taxon>
        <taxon>Anura</taxon>
        <taxon>Pipoidea</taxon>
        <taxon>Pipidae</taxon>
        <taxon>Xenopodinae</taxon>
        <taxon>Xenopus</taxon>
        <taxon>Xenopus</taxon>
    </lineage>
</organism>
<evidence type="ECO:0000250" key="1"/>
<evidence type="ECO:0000255" key="2"/>
<evidence type="ECO:0000256" key="3">
    <source>
        <dbReference type="SAM" id="MobiDB-lite"/>
    </source>
</evidence>
<evidence type="ECO:0000305" key="4"/>
<comment type="function">
    <text evidence="1">Cation/chloride cotransporter.</text>
</comment>
<comment type="subcellular location">
    <subcellularLocation>
        <location evidence="4">Membrane</location>
        <topology evidence="4">Multi-pass membrane protein</topology>
    </subcellularLocation>
</comment>
<comment type="similarity">
    <text evidence="4">Belongs to the SLC12A transporter family.</text>
</comment>
<gene>
    <name type="primary">slc12a8</name>
</gene>
<dbReference type="EMBL" id="AF529219">
    <property type="protein sequence ID" value="AAQ09093.1"/>
    <property type="molecule type" value="mRNA"/>
</dbReference>
<dbReference type="RefSeq" id="NP_001086448.1">
    <property type="nucleotide sequence ID" value="NM_001092979.1"/>
</dbReference>
<dbReference type="SMR" id="Q6A4L1"/>
<dbReference type="GeneID" id="446259"/>
<dbReference type="KEGG" id="xla:446259"/>
<dbReference type="AGR" id="Xenbase:XB-GENE-997782"/>
<dbReference type="CTD" id="446259"/>
<dbReference type="Xenbase" id="XB-GENE-997782">
    <property type="gene designation" value="slc12a8.L"/>
</dbReference>
<dbReference type="OrthoDB" id="2020542at2759"/>
<dbReference type="Proteomes" id="UP000186698">
    <property type="component" value="Chromosome 9_10L"/>
</dbReference>
<dbReference type="Bgee" id="446259">
    <property type="expression patterns" value="Expressed in stomach and 17 other cell types or tissues"/>
</dbReference>
<dbReference type="GO" id="GO:0016020">
    <property type="term" value="C:membrane"/>
    <property type="evidence" value="ECO:0007669"/>
    <property type="project" value="UniProtKB-SubCell"/>
</dbReference>
<dbReference type="GO" id="GO:0015379">
    <property type="term" value="F:potassium:chloride symporter activity"/>
    <property type="evidence" value="ECO:0000318"/>
    <property type="project" value="GO_Central"/>
</dbReference>
<dbReference type="GO" id="GO:0006884">
    <property type="term" value="P:cell volume homeostasis"/>
    <property type="evidence" value="ECO:0000318"/>
    <property type="project" value="GO_Central"/>
</dbReference>
<dbReference type="GO" id="GO:0055064">
    <property type="term" value="P:chloride ion homeostasis"/>
    <property type="evidence" value="ECO:0000318"/>
    <property type="project" value="GO_Central"/>
</dbReference>
<dbReference type="GO" id="GO:1902476">
    <property type="term" value="P:chloride transmembrane transport"/>
    <property type="evidence" value="ECO:0000318"/>
    <property type="project" value="GO_Central"/>
</dbReference>
<dbReference type="GO" id="GO:0055075">
    <property type="term" value="P:potassium ion homeostasis"/>
    <property type="evidence" value="ECO:0000318"/>
    <property type="project" value="GO_Central"/>
</dbReference>
<dbReference type="GO" id="GO:1990573">
    <property type="term" value="P:potassium ion import across plasma membrane"/>
    <property type="evidence" value="ECO:0000318"/>
    <property type="project" value="GO_Central"/>
</dbReference>
<dbReference type="FunFam" id="1.20.1740.10:FF:000030">
    <property type="entry name" value="solute carrier family 12 member 8"/>
    <property type="match status" value="1"/>
</dbReference>
<dbReference type="Gene3D" id="1.20.1740.10">
    <property type="entry name" value="Amino acid/polyamine transporter I"/>
    <property type="match status" value="1"/>
</dbReference>
<dbReference type="InterPro" id="IPR004841">
    <property type="entry name" value="AA-permease/SLC12A_dom"/>
</dbReference>
<dbReference type="InterPro" id="IPR004842">
    <property type="entry name" value="SLC12A_fam"/>
</dbReference>
<dbReference type="PANTHER" id="PTHR11827:SF6">
    <property type="entry name" value="SOLUTE CARRIER FAMILY 12 MEMBER 8"/>
    <property type="match status" value="1"/>
</dbReference>
<dbReference type="PANTHER" id="PTHR11827">
    <property type="entry name" value="SOLUTE CARRIER FAMILY 12, CATION COTRANSPORTERS"/>
    <property type="match status" value="1"/>
</dbReference>
<dbReference type="Pfam" id="PF00324">
    <property type="entry name" value="AA_permease"/>
    <property type="match status" value="1"/>
</dbReference>
<sequence length="721" mass="79406">MGMIEPNRSVLLNGSMNGSENIKDLFHEDAQVSQLQSRPWWKIQLFVWEPVLFGTWDGVFTSCMINIFGVVLFLRTGWLVGNTGVLLGIVLVSFVILVALVTVLSGIGVCERCSIGSGGVYSMVSTVLGGKVGGTIGVLYIFGQCVAGAMYITGFAESISDLLNLENMWVVRGISLAVLVGLLGINLAGVKWIIRLQLLLFLLLAVSTLDFVIGSFTHLDPENGFVGYSEELLRNNTFPDYTPGESFFTVFGVFFPAATGVMVGFNMSGDLQRPSINIPLGSLAAIGTSWFLYVVFVFLLGAICTREFLRYEFMIAEKVSLVGGLFLLGLYISSLASCMGGLYGAPRILQCIAQEKVIPALSFLGRGKGPNKTPVAAIFITGLLTMAFVFIGQVNVLAPIVTINFMLTYSAVDYSYFSVTMSYKMQHSPKKNGRPNSRVMSSTQPLILNKSTSYGSNGTLLEFTKDMNQLFKPNHTEAPESTSSQEKDPKMFKFSKPRKPAKQTLQDSFQLDLHQGPEHGLESRLLVTDLAENESQNSKAEITEDKNQGVDPTESDEPDSEEDVDIQQPTEEQKGDSTVAQKVPEFEIQELSTSFYAKFCNHWVAFLGAILSIVIMFVIQWIYALVNLGVAIILYLYIGRVNPGLNPGAAANFSFFAWIRQGARTLCRKPHPKEQFVVTPSLLSVGMETTQLTEENEDFASRGRYHHSSIITQGQFIDRYN</sequence>
<feature type="chain" id="PRO_0000305290" description="Solute carrier family 12 member 8">
    <location>
        <begin position="1"/>
        <end position="721"/>
    </location>
</feature>
<feature type="transmembrane region" description="Helical" evidence="2">
    <location>
        <begin position="53"/>
        <end position="73"/>
    </location>
</feature>
<feature type="transmembrane region" description="Helical" evidence="2">
    <location>
        <begin position="84"/>
        <end position="104"/>
    </location>
</feature>
<feature type="transmembrane region" description="Helical" evidence="2">
    <location>
        <begin position="115"/>
        <end position="135"/>
    </location>
</feature>
<feature type="transmembrane region" description="Helical" evidence="2">
    <location>
        <begin position="136"/>
        <end position="156"/>
    </location>
</feature>
<feature type="transmembrane region" description="Helical" evidence="2">
    <location>
        <begin position="174"/>
        <end position="194"/>
    </location>
</feature>
<feature type="transmembrane region" description="Helical" evidence="2">
    <location>
        <begin position="196"/>
        <end position="216"/>
    </location>
</feature>
<feature type="transmembrane region" description="Helical" evidence="2">
    <location>
        <begin position="247"/>
        <end position="267"/>
    </location>
</feature>
<feature type="transmembrane region" description="Helical" evidence="2">
    <location>
        <begin position="283"/>
        <end position="303"/>
    </location>
</feature>
<feature type="transmembrane region" description="Helical" evidence="2">
    <location>
        <begin position="321"/>
        <end position="341"/>
    </location>
</feature>
<feature type="transmembrane region" description="Helical" evidence="2">
    <location>
        <begin position="374"/>
        <end position="394"/>
    </location>
</feature>
<feature type="transmembrane region" description="Helical" evidence="2">
    <location>
        <begin position="397"/>
        <end position="417"/>
    </location>
</feature>
<feature type="transmembrane region" description="Helical" evidence="2">
    <location>
        <begin position="606"/>
        <end position="626"/>
    </location>
</feature>
<feature type="transmembrane region" description="Helical" evidence="2">
    <location>
        <begin position="628"/>
        <end position="648"/>
    </location>
</feature>
<feature type="region of interest" description="Disordered" evidence="3">
    <location>
        <begin position="473"/>
        <end position="505"/>
    </location>
</feature>
<feature type="region of interest" description="Disordered" evidence="3">
    <location>
        <begin position="533"/>
        <end position="580"/>
    </location>
</feature>
<feature type="compositionally biased region" description="Acidic residues" evidence="3">
    <location>
        <begin position="553"/>
        <end position="565"/>
    </location>
</feature>
<reference key="1">
    <citation type="submission" date="2002-07" db="EMBL/GenBank/DDBJ databases">
        <title>Sequence of the Xenopus ortholog of the SLC12A8 cation-chloride cotransporter.</title>
        <authorList>
            <person name="Mount D.B."/>
        </authorList>
    </citation>
    <scope>NUCLEOTIDE SEQUENCE [MRNA]</scope>
</reference>
<proteinExistence type="evidence at transcript level"/>
<accession>Q6A4L1</accession>
<protein>
    <recommendedName>
        <fullName>Solute carrier family 12 member 8</fullName>
    </recommendedName>
</protein>